<gene>
    <name evidence="1" type="primary">coaD</name>
    <name type="ordered locus">Dalk_0924</name>
</gene>
<name>COAD_DESAL</name>
<organism>
    <name type="scientific">Desulfatibacillum aliphaticivorans</name>
    <dbReference type="NCBI Taxonomy" id="218208"/>
    <lineage>
        <taxon>Bacteria</taxon>
        <taxon>Pseudomonadati</taxon>
        <taxon>Thermodesulfobacteriota</taxon>
        <taxon>Desulfobacteria</taxon>
        <taxon>Desulfobacterales</taxon>
        <taxon>Desulfatibacillaceae</taxon>
        <taxon>Desulfatibacillum</taxon>
    </lineage>
</organism>
<comment type="function">
    <text evidence="1">Reversibly transfers an adenylyl group from ATP to 4'-phosphopantetheine, yielding dephospho-CoA (dPCoA) and pyrophosphate.</text>
</comment>
<comment type="catalytic activity">
    <reaction evidence="1">
        <text>(R)-4'-phosphopantetheine + ATP + H(+) = 3'-dephospho-CoA + diphosphate</text>
        <dbReference type="Rhea" id="RHEA:19801"/>
        <dbReference type="ChEBI" id="CHEBI:15378"/>
        <dbReference type="ChEBI" id="CHEBI:30616"/>
        <dbReference type="ChEBI" id="CHEBI:33019"/>
        <dbReference type="ChEBI" id="CHEBI:57328"/>
        <dbReference type="ChEBI" id="CHEBI:61723"/>
        <dbReference type="EC" id="2.7.7.3"/>
    </reaction>
</comment>
<comment type="cofactor">
    <cofactor evidence="1">
        <name>Mg(2+)</name>
        <dbReference type="ChEBI" id="CHEBI:18420"/>
    </cofactor>
</comment>
<comment type="pathway">
    <text evidence="1">Cofactor biosynthesis; coenzyme A biosynthesis; CoA from (R)-pantothenate: step 4/5.</text>
</comment>
<comment type="subunit">
    <text evidence="1">Homohexamer.</text>
</comment>
<comment type="subcellular location">
    <subcellularLocation>
        <location evidence="1">Cytoplasm</location>
    </subcellularLocation>
</comment>
<comment type="similarity">
    <text evidence="1">Belongs to the bacterial CoaD family.</text>
</comment>
<feature type="chain" id="PRO_1000118073" description="Phosphopantetheine adenylyltransferase">
    <location>
        <begin position="1"/>
        <end position="175"/>
    </location>
</feature>
<feature type="binding site" evidence="1">
    <location>
        <begin position="10"/>
        <end position="11"/>
    </location>
    <ligand>
        <name>ATP</name>
        <dbReference type="ChEBI" id="CHEBI:30616"/>
    </ligand>
</feature>
<feature type="binding site" evidence="1">
    <location>
        <position position="10"/>
    </location>
    <ligand>
        <name>substrate</name>
    </ligand>
</feature>
<feature type="binding site" evidence="1">
    <location>
        <position position="18"/>
    </location>
    <ligand>
        <name>ATP</name>
        <dbReference type="ChEBI" id="CHEBI:30616"/>
    </ligand>
</feature>
<feature type="binding site" evidence="1">
    <location>
        <position position="42"/>
    </location>
    <ligand>
        <name>substrate</name>
    </ligand>
</feature>
<feature type="binding site" evidence="1">
    <location>
        <position position="74"/>
    </location>
    <ligand>
        <name>substrate</name>
    </ligand>
</feature>
<feature type="binding site" evidence="1">
    <location>
        <position position="88"/>
    </location>
    <ligand>
        <name>substrate</name>
    </ligand>
</feature>
<feature type="binding site" evidence="1">
    <location>
        <begin position="89"/>
        <end position="91"/>
    </location>
    <ligand>
        <name>ATP</name>
        <dbReference type="ChEBI" id="CHEBI:30616"/>
    </ligand>
</feature>
<feature type="binding site" evidence="1">
    <location>
        <position position="99"/>
    </location>
    <ligand>
        <name>ATP</name>
        <dbReference type="ChEBI" id="CHEBI:30616"/>
    </ligand>
</feature>
<feature type="binding site" evidence="1">
    <location>
        <begin position="124"/>
        <end position="130"/>
    </location>
    <ligand>
        <name>ATP</name>
        <dbReference type="ChEBI" id="CHEBI:30616"/>
    </ligand>
</feature>
<feature type="site" description="Transition state stabilizer" evidence="1">
    <location>
        <position position="18"/>
    </location>
</feature>
<sequence>MERTAIYAGSFDPVTNGHLDILKRGLKLFDRIIVAILINPNKQYLFSVEERISMLEEVTKEIPNTEIDTFSGLLVDYAEQKQAHAILRGMRAVSDFEYEFQLALMNRRLNREVQTVFLMTGLRWIFTSSSIIKEAARFGGNIHGMVPELVERRIDKKMKDTGLYIPPKNNKKQKG</sequence>
<dbReference type="EC" id="2.7.7.3" evidence="1"/>
<dbReference type="EMBL" id="CP001322">
    <property type="protein sequence ID" value="ACL02629.1"/>
    <property type="molecule type" value="Genomic_DNA"/>
</dbReference>
<dbReference type="RefSeq" id="WP_012610067.1">
    <property type="nucleotide sequence ID" value="NC_011768.1"/>
</dbReference>
<dbReference type="SMR" id="B8FI62"/>
<dbReference type="KEGG" id="dal:Dalk_0924"/>
<dbReference type="eggNOG" id="COG0669">
    <property type="taxonomic scope" value="Bacteria"/>
</dbReference>
<dbReference type="HOGENOM" id="CLU_100149_0_1_7"/>
<dbReference type="UniPathway" id="UPA00241">
    <property type="reaction ID" value="UER00355"/>
</dbReference>
<dbReference type="Proteomes" id="UP000000739">
    <property type="component" value="Chromosome"/>
</dbReference>
<dbReference type="GO" id="GO:0005737">
    <property type="term" value="C:cytoplasm"/>
    <property type="evidence" value="ECO:0007669"/>
    <property type="project" value="UniProtKB-SubCell"/>
</dbReference>
<dbReference type="GO" id="GO:0005524">
    <property type="term" value="F:ATP binding"/>
    <property type="evidence" value="ECO:0007669"/>
    <property type="project" value="UniProtKB-KW"/>
</dbReference>
<dbReference type="GO" id="GO:0004595">
    <property type="term" value="F:pantetheine-phosphate adenylyltransferase activity"/>
    <property type="evidence" value="ECO:0007669"/>
    <property type="project" value="UniProtKB-UniRule"/>
</dbReference>
<dbReference type="GO" id="GO:0015937">
    <property type="term" value="P:coenzyme A biosynthetic process"/>
    <property type="evidence" value="ECO:0007669"/>
    <property type="project" value="UniProtKB-UniRule"/>
</dbReference>
<dbReference type="CDD" id="cd02163">
    <property type="entry name" value="PPAT"/>
    <property type="match status" value="1"/>
</dbReference>
<dbReference type="Gene3D" id="3.40.50.620">
    <property type="entry name" value="HUPs"/>
    <property type="match status" value="1"/>
</dbReference>
<dbReference type="HAMAP" id="MF_00151">
    <property type="entry name" value="PPAT_bact"/>
    <property type="match status" value="1"/>
</dbReference>
<dbReference type="InterPro" id="IPR004821">
    <property type="entry name" value="Cyt_trans-like"/>
</dbReference>
<dbReference type="InterPro" id="IPR001980">
    <property type="entry name" value="PPAT"/>
</dbReference>
<dbReference type="InterPro" id="IPR014729">
    <property type="entry name" value="Rossmann-like_a/b/a_fold"/>
</dbReference>
<dbReference type="NCBIfam" id="TIGR01510">
    <property type="entry name" value="coaD_prev_kdtB"/>
    <property type="match status" value="1"/>
</dbReference>
<dbReference type="NCBIfam" id="TIGR00125">
    <property type="entry name" value="cyt_tran_rel"/>
    <property type="match status" value="1"/>
</dbReference>
<dbReference type="PANTHER" id="PTHR21342">
    <property type="entry name" value="PHOSPHOPANTETHEINE ADENYLYLTRANSFERASE"/>
    <property type="match status" value="1"/>
</dbReference>
<dbReference type="PANTHER" id="PTHR21342:SF1">
    <property type="entry name" value="PHOSPHOPANTETHEINE ADENYLYLTRANSFERASE"/>
    <property type="match status" value="1"/>
</dbReference>
<dbReference type="Pfam" id="PF01467">
    <property type="entry name" value="CTP_transf_like"/>
    <property type="match status" value="1"/>
</dbReference>
<dbReference type="PRINTS" id="PR01020">
    <property type="entry name" value="LPSBIOSNTHSS"/>
</dbReference>
<dbReference type="SUPFAM" id="SSF52374">
    <property type="entry name" value="Nucleotidylyl transferase"/>
    <property type="match status" value="1"/>
</dbReference>
<keyword id="KW-0067">ATP-binding</keyword>
<keyword id="KW-0173">Coenzyme A biosynthesis</keyword>
<keyword id="KW-0963">Cytoplasm</keyword>
<keyword id="KW-0460">Magnesium</keyword>
<keyword id="KW-0547">Nucleotide-binding</keyword>
<keyword id="KW-0548">Nucleotidyltransferase</keyword>
<keyword id="KW-1185">Reference proteome</keyword>
<keyword id="KW-0808">Transferase</keyword>
<protein>
    <recommendedName>
        <fullName evidence="1">Phosphopantetheine adenylyltransferase</fullName>
        <ecNumber evidence="1">2.7.7.3</ecNumber>
    </recommendedName>
    <alternativeName>
        <fullName evidence="1">Dephospho-CoA pyrophosphorylase</fullName>
    </alternativeName>
    <alternativeName>
        <fullName evidence="1">Pantetheine-phosphate adenylyltransferase</fullName>
        <shortName evidence="1">PPAT</shortName>
    </alternativeName>
</protein>
<reference key="1">
    <citation type="journal article" date="2012" name="Environ. Microbiol.">
        <title>The genome sequence of Desulfatibacillum alkenivorans AK-01: a blueprint for anaerobic alkane oxidation.</title>
        <authorList>
            <person name="Callaghan A.V."/>
            <person name="Morris B.E."/>
            <person name="Pereira I.A."/>
            <person name="McInerney M.J."/>
            <person name="Austin R.N."/>
            <person name="Groves J.T."/>
            <person name="Kukor J.J."/>
            <person name="Suflita J.M."/>
            <person name="Young L.Y."/>
            <person name="Zylstra G.J."/>
            <person name="Wawrik B."/>
        </authorList>
    </citation>
    <scope>NUCLEOTIDE SEQUENCE [LARGE SCALE GENOMIC DNA]</scope>
    <source>
        <strain>AK-01</strain>
    </source>
</reference>
<evidence type="ECO:0000255" key="1">
    <source>
        <dbReference type="HAMAP-Rule" id="MF_00151"/>
    </source>
</evidence>
<accession>B8FI62</accession>
<proteinExistence type="inferred from homology"/>